<protein>
    <recommendedName>
        <fullName>Protein cornichon homolog 1</fullName>
        <shortName>CNIH-1</shortName>
    </recommendedName>
    <alternativeName>
        <fullName>Cornichon family AMPA receptor auxiliary protein 1</fullName>
    </alternativeName>
    <alternativeName>
        <fullName>Protein cornichon homolog</fullName>
    </alternativeName>
    <alternativeName>
        <fullName>T-cell growth-associated molecule 77</fullName>
        <shortName>TGAM77</shortName>
    </alternativeName>
</protein>
<sequence>MAFTFAAFCYMLALLLTAALIFFAIWHIIAFDELKTDYKNPIDQCNTLNPLVLPEYLIHAFFCVMFLCAAEWLTLGLNMPLLAYHIWRYMSRPVMSGPGLYDPTTIMNADILAYCQKEGWCKLAFYLLAFFYYLYGMIYVLVSS</sequence>
<keyword id="KW-0256">Endoplasmic reticulum</keyword>
<keyword id="KW-0931">ER-Golgi transport</keyword>
<keyword id="KW-0333">Golgi apparatus</keyword>
<keyword id="KW-0472">Membrane</keyword>
<keyword id="KW-1267">Proteomics identification</keyword>
<keyword id="KW-1185">Reference proteome</keyword>
<keyword id="KW-0812">Transmembrane</keyword>
<keyword id="KW-1133">Transmembrane helix</keyword>
<keyword id="KW-0813">Transport</keyword>
<dbReference type="EMBL" id="AF104398">
    <property type="protein sequence ID" value="AAC98388.1"/>
    <property type="molecule type" value="mRNA"/>
</dbReference>
<dbReference type="EMBL" id="AF070654">
    <property type="protein sequence ID" value="AAD20960.1"/>
    <property type="molecule type" value="mRNA"/>
</dbReference>
<dbReference type="EMBL" id="AY358635">
    <property type="protein sequence ID" value="AAQ88998.1"/>
    <property type="molecule type" value="mRNA"/>
</dbReference>
<dbReference type="EMBL" id="AL359792">
    <property type="status" value="NOT_ANNOTATED_CDS"/>
    <property type="molecule type" value="Genomic_DNA"/>
</dbReference>
<dbReference type="EMBL" id="BC103741">
    <property type="protein sequence ID" value="AAI03742.1"/>
    <property type="molecule type" value="mRNA"/>
</dbReference>
<dbReference type="EMBL" id="AF031379">
    <property type="protein sequence ID" value="AAD32301.1"/>
    <property type="molecule type" value="mRNA"/>
</dbReference>
<dbReference type="CCDS" id="CCDS9717.1"/>
<dbReference type="RefSeq" id="NP_005767.1">
    <property type="nucleotide sequence ID" value="NM_005776.3"/>
</dbReference>
<dbReference type="SMR" id="O95406"/>
<dbReference type="BioGRID" id="115476">
    <property type="interactions" value="34"/>
</dbReference>
<dbReference type="FunCoup" id="O95406">
    <property type="interactions" value="1305"/>
</dbReference>
<dbReference type="IntAct" id="O95406">
    <property type="interactions" value="29"/>
</dbReference>
<dbReference type="MINT" id="O95406"/>
<dbReference type="STRING" id="9606.ENSP00000216416"/>
<dbReference type="TCDB" id="8.A.61.1.2">
    <property type="family name" value="the endoplasmic reticulum-derived vesicle protein, erv14 (erv14) family"/>
</dbReference>
<dbReference type="iPTMnet" id="O95406"/>
<dbReference type="BioMuta" id="CNIH1"/>
<dbReference type="jPOST" id="O95406"/>
<dbReference type="MassIVE" id="O95406"/>
<dbReference type="PaxDb" id="9606-ENSP00000216416"/>
<dbReference type="PeptideAtlas" id="O95406"/>
<dbReference type="ProteomicsDB" id="50859"/>
<dbReference type="Pumba" id="O95406"/>
<dbReference type="Antibodypedia" id="151">
    <property type="antibodies" value="92 antibodies from 18 providers"/>
</dbReference>
<dbReference type="DNASU" id="10175"/>
<dbReference type="Ensembl" id="ENST00000216416.9">
    <property type="protein sequence ID" value="ENSP00000216416.4"/>
    <property type="gene ID" value="ENSG00000100528.12"/>
</dbReference>
<dbReference type="GeneID" id="10175"/>
<dbReference type="KEGG" id="hsa:10175"/>
<dbReference type="MANE-Select" id="ENST00000216416.9">
    <property type="protein sequence ID" value="ENSP00000216416.4"/>
    <property type="RefSeq nucleotide sequence ID" value="NM_005776.3"/>
    <property type="RefSeq protein sequence ID" value="NP_005767.1"/>
</dbReference>
<dbReference type="UCSC" id="uc001xat.2">
    <property type="organism name" value="human"/>
</dbReference>
<dbReference type="AGR" id="HGNC:19431"/>
<dbReference type="CTD" id="10175"/>
<dbReference type="DisGeNET" id="10175"/>
<dbReference type="GeneCards" id="CNIH1"/>
<dbReference type="HGNC" id="HGNC:19431">
    <property type="gene designation" value="CNIH1"/>
</dbReference>
<dbReference type="HPA" id="ENSG00000100528">
    <property type="expression patterns" value="Low tissue specificity"/>
</dbReference>
<dbReference type="MIM" id="611287">
    <property type="type" value="gene"/>
</dbReference>
<dbReference type="neXtProt" id="NX_O95406"/>
<dbReference type="OpenTargets" id="ENSG00000100528"/>
<dbReference type="PharmGKB" id="PA134864821"/>
<dbReference type="VEuPathDB" id="HostDB:ENSG00000100528"/>
<dbReference type="eggNOG" id="KOG2729">
    <property type="taxonomic scope" value="Eukaryota"/>
</dbReference>
<dbReference type="GeneTree" id="ENSGT00950000182834"/>
<dbReference type="InParanoid" id="O95406"/>
<dbReference type="OMA" id="FAVFHVI"/>
<dbReference type="OrthoDB" id="434393at2759"/>
<dbReference type="PAN-GO" id="O95406">
    <property type="GO annotations" value="0 GO annotations based on evolutionary models"/>
</dbReference>
<dbReference type="PhylomeDB" id="O95406"/>
<dbReference type="TreeFam" id="TF300083"/>
<dbReference type="PathwayCommons" id="O95406"/>
<dbReference type="Reactome" id="R-HSA-204005">
    <property type="pathway name" value="COPII-mediated vesicle transport"/>
</dbReference>
<dbReference type="Reactome" id="R-HSA-5694530">
    <property type="pathway name" value="Cargo concentration in the ER"/>
</dbReference>
<dbReference type="SignaLink" id="O95406"/>
<dbReference type="BioGRID-ORCS" id="10175">
    <property type="hits" value="37 hits in 1149 CRISPR screens"/>
</dbReference>
<dbReference type="ChiTaRS" id="CNIH1">
    <property type="organism name" value="human"/>
</dbReference>
<dbReference type="GeneWiki" id="CNIH"/>
<dbReference type="GenomeRNAi" id="10175"/>
<dbReference type="Pharos" id="O95406">
    <property type="development level" value="Tbio"/>
</dbReference>
<dbReference type="PRO" id="PR:O95406"/>
<dbReference type="Proteomes" id="UP000005640">
    <property type="component" value="Chromosome 14"/>
</dbReference>
<dbReference type="RNAct" id="O95406">
    <property type="molecule type" value="protein"/>
</dbReference>
<dbReference type="Bgee" id="ENSG00000100528">
    <property type="expression patterns" value="Expressed in jejunal mucosa and 213 other cell types or tissues"/>
</dbReference>
<dbReference type="ExpressionAtlas" id="O95406">
    <property type="expression patterns" value="baseline and differential"/>
</dbReference>
<dbReference type="GO" id="GO:0005789">
    <property type="term" value="C:endoplasmic reticulum membrane"/>
    <property type="evidence" value="ECO:0000304"/>
    <property type="project" value="Reactome"/>
</dbReference>
<dbReference type="GO" id="GO:0033116">
    <property type="term" value="C:endoplasmic reticulum-Golgi intermediate compartment membrane"/>
    <property type="evidence" value="ECO:0000304"/>
    <property type="project" value="Reactome"/>
</dbReference>
<dbReference type="GO" id="GO:0012507">
    <property type="term" value="C:ER to Golgi transport vesicle membrane"/>
    <property type="evidence" value="ECO:0000304"/>
    <property type="project" value="Reactome"/>
</dbReference>
<dbReference type="GO" id="GO:0000139">
    <property type="term" value="C:Golgi membrane"/>
    <property type="evidence" value="ECO:0007669"/>
    <property type="project" value="UniProtKB-SubCell"/>
</dbReference>
<dbReference type="GO" id="GO:0005102">
    <property type="term" value="F:signaling receptor binding"/>
    <property type="evidence" value="ECO:0000318"/>
    <property type="project" value="GO_Central"/>
</dbReference>
<dbReference type="GO" id="GO:0006955">
    <property type="term" value="P:immune response"/>
    <property type="evidence" value="ECO:0000304"/>
    <property type="project" value="ProtInc"/>
</dbReference>
<dbReference type="GO" id="GO:0007165">
    <property type="term" value="P:signal transduction"/>
    <property type="evidence" value="ECO:0000304"/>
    <property type="project" value="ProtInc"/>
</dbReference>
<dbReference type="GO" id="GO:0016192">
    <property type="term" value="P:vesicle-mediated transport"/>
    <property type="evidence" value="ECO:0007669"/>
    <property type="project" value="UniProtKB-KW"/>
</dbReference>
<dbReference type="InterPro" id="IPR003377">
    <property type="entry name" value="Cornichon"/>
</dbReference>
<dbReference type="InterPro" id="IPR033466">
    <property type="entry name" value="Cornichon_conserved"/>
</dbReference>
<dbReference type="PANTHER" id="PTHR12290">
    <property type="entry name" value="CORNICHON-RELATED"/>
    <property type="match status" value="1"/>
</dbReference>
<dbReference type="Pfam" id="PF03311">
    <property type="entry name" value="Cornichon"/>
    <property type="match status" value="1"/>
</dbReference>
<dbReference type="SMART" id="SM01398">
    <property type="entry name" value="Cornichon"/>
    <property type="match status" value="1"/>
</dbReference>
<dbReference type="PROSITE" id="PS01340">
    <property type="entry name" value="CORNICHON"/>
    <property type="match status" value="1"/>
</dbReference>
<name>CNIH1_HUMAN</name>
<proteinExistence type="evidence at protein level"/>
<evidence type="ECO:0000255" key="1"/>
<evidence type="ECO:0000269" key="2">
    <source>
    </source>
</evidence>
<evidence type="ECO:0000269" key="3">
    <source>
    </source>
</evidence>
<evidence type="ECO:0000305" key="4"/>
<comment type="function">
    <text evidence="2">Involved in the selective transport and maturation of TGF-alpha family proteins.</text>
</comment>
<comment type="subunit">
    <text evidence="2">Interacts with AREG immature precursor and with immature TGFA, i.e. with a prosegment and lacking full N-glycosylation, but not with the fully N-glycosylated form. In the Golgi apparatus, may form a complex with GORASP55 and transmembrane TGFA.</text>
</comment>
<comment type="interaction">
    <interactant intactId="EBI-12172273">
        <id>O95406</id>
    </interactant>
    <interactant intactId="EBI-13059134">
        <id>Q13520</id>
        <label>AQP6</label>
    </interactant>
    <organismsDiffer>false</organismsDiffer>
    <experiments>3</experiments>
</comment>
<comment type="interaction">
    <interactant intactId="EBI-12172273">
        <id>O95406</id>
    </interactant>
    <interactant intactId="EBI-700794">
        <id>Q13323</id>
        <label>BIK</label>
    </interactant>
    <organismsDiffer>false</organismsDiffer>
    <experiments>3</experiments>
</comment>
<comment type="interaction">
    <interactant intactId="EBI-12172273">
        <id>O95406</id>
    </interactant>
    <interactant intactId="EBI-6657396">
        <id>P19397</id>
        <label>CD53</label>
    </interactant>
    <organismsDiffer>false</organismsDiffer>
    <experiments>3</experiments>
</comment>
<comment type="interaction">
    <interactant intactId="EBI-12172273">
        <id>O95406</id>
    </interactant>
    <interactant intactId="EBI-7797864">
        <id>P11912</id>
        <label>CD79A</label>
    </interactant>
    <organismsDiffer>false</organismsDiffer>
    <experiments>3</experiments>
</comment>
<comment type="interaction">
    <interactant intactId="EBI-12172273">
        <id>O95406</id>
    </interactant>
    <interactant intactId="EBI-740744">
        <id>O95471</id>
        <label>CLDN7</label>
    </interactant>
    <organismsDiffer>false</organismsDiffer>
    <experiments>3</experiments>
</comment>
<comment type="interaction">
    <interactant intactId="EBI-12172273">
        <id>O95406</id>
    </interactant>
    <interactant intactId="EBI-18013275">
        <id>Q7Z7G2</id>
        <label>CPLX4</label>
    </interactant>
    <organismsDiffer>false</organismsDiffer>
    <experiments>3</experiments>
</comment>
<comment type="interaction">
    <interactant intactId="EBI-12172273">
        <id>O95406</id>
    </interactant>
    <interactant intactId="EBI-1046040">
        <id>P00387</id>
        <label>CYB5R3</label>
    </interactant>
    <organismsDiffer>false</organismsDiffer>
    <experiments>3</experiments>
</comment>
<comment type="interaction">
    <interactant intactId="EBI-12172273">
        <id>O95406</id>
    </interactant>
    <interactant intactId="EBI-781551">
        <id>Q9Y282</id>
        <label>ERGIC3</label>
    </interactant>
    <organismsDiffer>false</organismsDiffer>
    <experiments>3</experiments>
</comment>
<comment type="interaction">
    <interactant intactId="EBI-12172273">
        <id>O95406</id>
    </interactant>
    <interactant intactId="EBI-17640610">
        <id>P34910-2</id>
        <label>EVI2B</label>
    </interactant>
    <organismsDiffer>false</organismsDiffer>
    <experiments>3</experiments>
</comment>
<comment type="interaction">
    <interactant intactId="EBI-12172273">
        <id>O95406</id>
    </interactant>
    <interactant intactId="EBI-18304435">
        <id>Q5JX71</id>
        <label>FAM209A</label>
    </interactant>
    <organismsDiffer>false</organismsDiffer>
    <experiments>3</experiments>
</comment>
<comment type="interaction">
    <interactant intactId="EBI-12172273">
        <id>O95406</id>
    </interactant>
    <interactant intactId="EBI-2833872">
        <id>O15552</id>
        <label>FFAR2</label>
    </interactant>
    <organismsDiffer>false</organismsDiffer>
    <experiments>3</experiments>
</comment>
<comment type="interaction">
    <interactant intactId="EBI-12172273">
        <id>O95406</id>
    </interactant>
    <interactant intactId="EBI-13345167">
        <id>Q8TDT2</id>
        <label>GPR152</label>
    </interactant>
    <organismsDiffer>false</organismsDiffer>
    <experiments>3</experiments>
</comment>
<comment type="interaction">
    <interactant intactId="EBI-12172273">
        <id>O95406</id>
    </interactant>
    <interactant intactId="EBI-11721746">
        <id>Q8TED1</id>
        <label>GPX8</label>
    </interactant>
    <organismsDiffer>false</organismsDiffer>
    <experiments>3</experiments>
</comment>
<comment type="interaction">
    <interactant intactId="EBI-12172273">
        <id>O95406</id>
    </interactant>
    <interactant intactId="EBI-994141">
        <id>P28335</id>
        <label>HTR2C</label>
    </interactant>
    <organismsDiffer>false</organismsDiffer>
    <experiments>3</experiments>
</comment>
<comment type="interaction">
    <interactant intactId="EBI-12172273">
        <id>O95406</id>
    </interactant>
    <interactant intactId="EBI-17490413">
        <id>A8MZ59</id>
        <label>LEUTX</label>
    </interactant>
    <organismsDiffer>false</organismsDiffer>
    <experiments>3</experiments>
</comment>
<comment type="interaction">
    <interactant intactId="EBI-12172273">
        <id>O95406</id>
    </interactant>
    <interactant intactId="EBI-358888">
        <id>Q96AG4</id>
        <label>LRRC59</label>
    </interactant>
    <organismsDiffer>false</organismsDiffer>
    <experiments>3</experiments>
</comment>
<comment type="interaction">
    <interactant intactId="EBI-12172273">
        <id>O95406</id>
    </interactant>
    <interactant intactId="EBI-2816356">
        <id>Q8IX19</id>
        <label>MCEMP1</label>
    </interactant>
    <organismsDiffer>false</organismsDiffer>
    <experiments>3</experiments>
</comment>
<comment type="interaction">
    <interactant intactId="EBI-12172273">
        <id>O95406</id>
    </interactant>
    <interactant intactId="EBI-11956541">
        <id>Q9GZY8-5</id>
        <label>MFF</label>
    </interactant>
    <organismsDiffer>false</organismsDiffer>
    <experiments>3</experiments>
</comment>
<comment type="interaction">
    <interactant intactId="EBI-12172273">
        <id>O95406</id>
    </interactant>
    <interactant intactId="EBI-5454865">
        <id>Q6IN84</id>
        <label>MRM1</label>
    </interactant>
    <organismsDiffer>false</organismsDiffer>
    <experiments>3</experiments>
</comment>
<comment type="interaction">
    <interactant intactId="EBI-12172273">
        <id>O95406</id>
    </interactant>
    <interactant intactId="EBI-12807478">
        <id>P35372-10</id>
        <label>OPRM1</label>
    </interactant>
    <organismsDiffer>false</organismsDiffer>
    <experiments>3</experiments>
</comment>
<comment type="interaction">
    <interactant intactId="EBI-12172273">
        <id>O95406</id>
    </interactant>
    <interactant intactId="EBI-13044680">
        <id>Q9Y225-2</id>
        <label>RNF24</label>
    </interactant>
    <organismsDiffer>false</organismsDiffer>
    <experiments>3</experiments>
</comment>
<comment type="interaction">
    <interactant intactId="EBI-12172273">
        <id>O95406</id>
    </interactant>
    <interactant intactId="EBI-18035902">
        <id>Q96DD7</id>
        <label>SHISA4</label>
    </interactant>
    <organismsDiffer>false</organismsDiffer>
    <experiments>3</experiments>
</comment>
<comment type="interaction">
    <interactant intactId="EBI-12172273">
        <id>O95406</id>
    </interactant>
    <interactant intactId="EBI-18159983">
        <id>Q3KNW5</id>
        <label>SLC10A6</label>
    </interactant>
    <organismsDiffer>false</organismsDiffer>
    <experiments>3</experiments>
</comment>
<comment type="interaction">
    <interactant intactId="EBI-12172273">
        <id>O95406</id>
    </interactant>
    <interactant intactId="EBI-17595455">
        <id>P54219-3</id>
        <label>SLC18A1</label>
    </interactant>
    <organismsDiffer>false</organismsDiffer>
    <experiments>3</experiments>
</comment>
<comment type="interaction">
    <interactant intactId="EBI-12172273">
        <id>O95406</id>
    </interactant>
    <interactant intactId="EBI-12081840">
        <id>A1A5C7-2</id>
        <label>SLC22A23</label>
    </interactant>
    <organismsDiffer>false</organismsDiffer>
    <experiments>3</experiments>
</comment>
<comment type="interaction">
    <interactant intactId="EBI-12172273">
        <id>O95406</id>
    </interactant>
    <interactant intactId="EBI-17295964">
        <id>Q9NQQ7-3</id>
        <label>SLC35C2</label>
    </interactant>
    <organismsDiffer>false</organismsDiffer>
    <experiments>3</experiments>
</comment>
<comment type="interaction">
    <interactant intactId="EBI-12172273">
        <id>O95406</id>
    </interactant>
    <interactant intactId="EBI-741850">
        <id>Q9BZL3</id>
        <label>SMIM3</label>
    </interactant>
    <organismsDiffer>false</organismsDiffer>
    <experiments>6</experiments>
</comment>
<comment type="interaction">
    <interactant intactId="EBI-12172273">
        <id>O95406</id>
    </interactant>
    <interactant intactId="EBI-18178701">
        <id>Q4KMG9</id>
        <label>TMEM52B</label>
    </interactant>
    <organismsDiffer>false</organismsDiffer>
    <experiments>3</experiments>
</comment>
<comment type="subcellular location">
    <subcellularLocation>
        <location evidence="2">Endoplasmic reticulum membrane</location>
        <topology evidence="2">Multi-pass membrane protein</topology>
    </subcellularLocation>
    <subcellularLocation>
        <location evidence="2">Golgi apparatus membrane</location>
    </subcellularLocation>
    <text>Located primarily in the ER; may cycle between the ER and the Golgi apparatus.</text>
</comment>
<comment type="tissue specificity">
    <text evidence="3">Highly expressed in heart, liver, skeletal muscle, pancreas, adrenal medulla and cortex, thyroid, testis, spleen, appendix, peripheral blood lymphocytes and bone marrow. Lower expression found in brain, placenta, lung, kidney, ovary, small intestine, stomach, lymph node, thymus and fetal liver. Expression is up-regulated in dorsolateral prefrontal cortex of patients with schizophrenia (postmortem brain study).</text>
</comment>
<comment type="similarity">
    <text evidence="4">Belongs to the cornichon family.</text>
</comment>
<gene>
    <name type="primary">CNIH1</name>
    <name type="synonym">CNIH</name>
    <name type="synonym">CNIL</name>
    <name type="ORF">UNQ155/PRO181</name>
</gene>
<organism>
    <name type="scientific">Homo sapiens</name>
    <name type="common">Human</name>
    <dbReference type="NCBI Taxonomy" id="9606"/>
    <lineage>
        <taxon>Eukaryota</taxon>
        <taxon>Metazoa</taxon>
        <taxon>Chordata</taxon>
        <taxon>Craniata</taxon>
        <taxon>Vertebrata</taxon>
        <taxon>Euteleostomi</taxon>
        <taxon>Mammalia</taxon>
        <taxon>Eutheria</taxon>
        <taxon>Euarchontoglires</taxon>
        <taxon>Primates</taxon>
        <taxon>Haplorrhini</taxon>
        <taxon>Catarrhini</taxon>
        <taxon>Hominidae</taxon>
        <taxon>Homo</taxon>
    </lineage>
</organism>
<accession>O95406</accession>
<accession>Q3SYM7</accession>
<reference key="1">
    <citation type="submission" date="1998-11" db="EMBL/GenBank/DDBJ databases">
        <authorList>
            <person name="Plisov S.Y."/>
            <person name="Ivanov S.V."/>
            <person name="Lerman M."/>
            <person name="Perantoni A.O."/>
        </authorList>
    </citation>
    <scope>NUCLEOTIDE SEQUENCE [MRNA]</scope>
    <source>
        <tissue>Carcinoma</tissue>
    </source>
</reference>
<reference key="2">
    <citation type="journal article" date="2000" name="Genome Res.">
        <title>Cloning and functional analysis of cDNAs with open reading frames for 300 previously undefined genes expressed in CD34+ hematopoietic stem/progenitor cells.</title>
        <authorList>
            <person name="Zhang Q.-H."/>
            <person name="Ye M."/>
            <person name="Wu X.-Y."/>
            <person name="Ren S.-X."/>
            <person name="Zhao M."/>
            <person name="Zhao C.-J."/>
            <person name="Fu G."/>
            <person name="Shen Y."/>
            <person name="Fan H.-Y."/>
            <person name="Lu G."/>
            <person name="Zhong M."/>
            <person name="Xu X.-R."/>
            <person name="Han Z.-G."/>
            <person name="Zhang J.-W."/>
            <person name="Tao J."/>
            <person name="Huang Q.-H."/>
            <person name="Zhou J."/>
            <person name="Hu G.-X."/>
            <person name="Gu J."/>
            <person name="Chen S.-J."/>
            <person name="Chen Z."/>
        </authorList>
    </citation>
    <scope>NUCLEOTIDE SEQUENCE [LARGE SCALE MRNA]</scope>
    <source>
        <tissue>Umbilical cord blood</tissue>
    </source>
</reference>
<reference key="3">
    <citation type="journal article" date="2003" name="Genome Res.">
        <title>The secreted protein discovery initiative (SPDI), a large-scale effort to identify novel human secreted and transmembrane proteins: a bioinformatics assessment.</title>
        <authorList>
            <person name="Clark H.F."/>
            <person name="Gurney A.L."/>
            <person name="Abaya E."/>
            <person name="Baker K."/>
            <person name="Baldwin D.T."/>
            <person name="Brush J."/>
            <person name="Chen J."/>
            <person name="Chow B."/>
            <person name="Chui C."/>
            <person name="Crowley C."/>
            <person name="Currell B."/>
            <person name="Deuel B."/>
            <person name="Dowd P."/>
            <person name="Eaton D."/>
            <person name="Foster J.S."/>
            <person name="Grimaldi C."/>
            <person name="Gu Q."/>
            <person name="Hass P.E."/>
            <person name="Heldens S."/>
            <person name="Huang A."/>
            <person name="Kim H.S."/>
            <person name="Klimowski L."/>
            <person name="Jin Y."/>
            <person name="Johnson S."/>
            <person name="Lee J."/>
            <person name="Lewis L."/>
            <person name="Liao D."/>
            <person name="Mark M.R."/>
            <person name="Robbie E."/>
            <person name="Sanchez C."/>
            <person name="Schoenfeld J."/>
            <person name="Seshagiri S."/>
            <person name="Simmons L."/>
            <person name="Singh J."/>
            <person name="Smith V."/>
            <person name="Stinson J."/>
            <person name="Vagts A."/>
            <person name="Vandlen R.L."/>
            <person name="Watanabe C."/>
            <person name="Wieand D."/>
            <person name="Woods K."/>
            <person name="Xie M.-H."/>
            <person name="Yansura D.G."/>
            <person name="Yi S."/>
            <person name="Yu G."/>
            <person name="Yuan J."/>
            <person name="Zhang M."/>
            <person name="Zhang Z."/>
            <person name="Goddard A.D."/>
            <person name="Wood W.I."/>
            <person name="Godowski P.J."/>
            <person name="Gray A.M."/>
        </authorList>
    </citation>
    <scope>NUCLEOTIDE SEQUENCE [LARGE SCALE MRNA]</scope>
</reference>
<reference key="4">
    <citation type="journal article" date="2003" name="Nature">
        <title>The DNA sequence and analysis of human chromosome 14.</title>
        <authorList>
            <person name="Heilig R."/>
            <person name="Eckenberg R."/>
            <person name="Petit J.-L."/>
            <person name="Fonknechten N."/>
            <person name="Da Silva C."/>
            <person name="Cattolico L."/>
            <person name="Levy M."/>
            <person name="Barbe V."/>
            <person name="De Berardinis V."/>
            <person name="Ureta-Vidal A."/>
            <person name="Pelletier E."/>
            <person name="Vico V."/>
            <person name="Anthouard V."/>
            <person name="Rowen L."/>
            <person name="Madan A."/>
            <person name="Qin S."/>
            <person name="Sun H."/>
            <person name="Du H."/>
            <person name="Pepin K."/>
            <person name="Artiguenave F."/>
            <person name="Robert C."/>
            <person name="Cruaud C."/>
            <person name="Bruels T."/>
            <person name="Jaillon O."/>
            <person name="Friedlander L."/>
            <person name="Samson G."/>
            <person name="Brottier P."/>
            <person name="Cure S."/>
            <person name="Segurens B."/>
            <person name="Aniere F."/>
            <person name="Samain S."/>
            <person name="Crespeau H."/>
            <person name="Abbasi N."/>
            <person name="Aiach N."/>
            <person name="Boscus D."/>
            <person name="Dickhoff R."/>
            <person name="Dors M."/>
            <person name="Dubois I."/>
            <person name="Friedman C."/>
            <person name="Gouyvenoux M."/>
            <person name="James R."/>
            <person name="Madan A."/>
            <person name="Mairey-Estrada B."/>
            <person name="Mangenot S."/>
            <person name="Martins N."/>
            <person name="Menard M."/>
            <person name="Oztas S."/>
            <person name="Ratcliffe A."/>
            <person name="Shaffer T."/>
            <person name="Trask B."/>
            <person name="Vacherie B."/>
            <person name="Bellemere C."/>
            <person name="Belser C."/>
            <person name="Besnard-Gonnet M."/>
            <person name="Bartol-Mavel D."/>
            <person name="Boutard M."/>
            <person name="Briez-Silla S."/>
            <person name="Combette S."/>
            <person name="Dufosse-Laurent V."/>
            <person name="Ferron C."/>
            <person name="Lechaplais C."/>
            <person name="Louesse C."/>
            <person name="Muselet D."/>
            <person name="Magdelenat G."/>
            <person name="Pateau E."/>
            <person name="Petit E."/>
            <person name="Sirvain-Trukniewicz P."/>
            <person name="Trybou A."/>
            <person name="Vega-Czarny N."/>
            <person name="Bataille E."/>
            <person name="Bluet E."/>
            <person name="Bordelais I."/>
            <person name="Dubois M."/>
            <person name="Dumont C."/>
            <person name="Guerin T."/>
            <person name="Haffray S."/>
            <person name="Hammadi R."/>
            <person name="Muanga J."/>
            <person name="Pellouin V."/>
            <person name="Robert D."/>
            <person name="Wunderle E."/>
            <person name="Gauguet G."/>
            <person name="Roy A."/>
            <person name="Sainte-Marthe L."/>
            <person name="Verdier J."/>
            <person name="Verdier-Discala C."/>
            <person name="Hillier L.W."/>
            <person name="Fulton L."/>
            <person name="McPherson J."/>
            <person name="Matsuda F."/>
            <person name="Wilson R."/>
            <person name="Scarpelli C."/>
            <person name="Gyapay G."/>
            <person name="Wincker P."/>
            <person name="Saurin W."/>
            <person name="Quetier F."/>
            <person name="Waterston R."/>
            <person name="Hood L."/>
            <person name="Weissenbach J."/>
        </authorList>
    </citation>
    <scope>NUCLEOTIDE SEQUENCE [LARGE SCALE GENOMIC DNA]</scope>
</reference>
<reference key="5">
    <citation type="journal article" date="2004" name="Genome Res.">
        <title>The status, quality, and expansion of the NIH full-length cDNA project: the Mammalian Gene Collection (MGC).</title>
        <authorList>
            <consortium name="The MGC Project Team"/>
        </authorList>
    </citation>
    <scope>NUCLEOTIDE SEQUENCE [LARGE SCALE MRNA]</scope>
    <source>
        <tissue>Pancreas</tissue>
    </source>
</reference>
<reference key="6">
    <citation type="journal article" date="1999" name="Biochim. Biophys. Acta">
        <title>The human homolog of Drosophila cornichon protein is differentially expressed in alloactivated T-cells.</title>
        <authorList>
            <person name="Utku N."/>
            <person name="Bulwin G.-C."/>
            <person name="Beinke S."/>
            <person name="Heinemann T."/>
            <person name="Beato F."/>
            <person name="Randall J."/>
            <person name="Schnieders B."/>
            <person name="Sandhoff K."/>
            <person name="Volk H.-D."/>
            <person name="Milford E."/>
            <person name="Gullans S.R."/>
        </authorList>
    </citation>
    <scope>NUCLEOTIDE SEQUENCE [MRNA] OF 11-144</scope>
</reference>
<reference key="7">
    <citation type="journal article" date="2007" name="J. Cell Sci.">
        <title>Cornichon regulates transport and secretion of TGFalpha-related proteins in metazoan cells.</title>
        <authorList>
            <person name="Perez Castro C."/>
            <person name="Piscopo D."/>
            <person name="Nakagawa T."/>
            <person name="Derynck R."/>
        </authorList>
    </citation>
    <scope>FUNCTION</scope>
    <scope>INTERACTION WITH AREG AND TGFA</scope>
    <scope>SUBCELLULAR LOCATION</scope>
</reference>
<reference key="8">
    <citation type="journal article" date="2012" name="NeuroReport">
        <title>Upregulation of cornichon transcripts in the dorsolateral prefrontal cortex in schizophrenia.</title>
        <authorList>
            <person name="Drummond J.B."/>
            <person name="Simmons M."/>
            <person name="Haroutunian V."/>
            <person name="Meador-Woodruff J.H."/>
        </authorList>
    </citation>
    <scope>TISSUE SPECIFICITY</scope>
</reference>
<feature type="chain" id="PRO_0000122222" description="Protein cornichon homolog 1">
    <location>
        <begin position="1"/>
        <end position="144"/>
    </location>
</feature>
<feature type="topological domain" description="Cytoplasmic" evidence="1">
    <location>
        <begin position="1"/>
        <end position="10"/>
    </location>
</feature>
<feature type="transmembrane region" description="Helical" evidence="1">
    <location>
        <begin position="11"/>
        <end position="31"/>
    </location>
</feature>
<feature type="topological domain" description="Lumenal" evidence="1">
    <location>
        <begin position="32"/>
        <end position="56"/>
    </location>
</feature>
<feature type="transmembrane region" description="Helical" evidence="1">
    <location>
        <begin position="57"/>
        <end position="77"/>
    </location>
</feature>
<feature type="topological domain" description="Cytoplasmic" evidence="1">
    <location>
        <begin position="78"/>
        <end position="122"/>
    </location>
</feature>
<feature type="transmembrane region" description="Helical" evidence="1">
    <location>
        <begin position="123"/>
        <end position="143"/>
    </location>
</feature>
<feature type="topological domain" description="Lumenal" evidence="1">
    <location>
        <position position="144"/>
    </location>
</feature>